<sequence length="221" mass="25116">MTDNGTITVEELKQLLEQWNLVIGFIFLAWIMLLQFAYSNRNRFLYIIKLVFLWLLWPVTLACFVLAAVYRINWVTGGIAIAMACIVGLMWLSYFVASFRLFARTRSMWSFNPETNILLNVPLRGTILTRPLLESELVIGAVIIRGHLRMAGHSLGRCDIKDLPKEITVATSRTLSYYKLGASQRVGNDSGFAAYNRYRIGNYKLNTDHSGSNDNIALLVQ</sequence>
<organismHost>
    <name type="scientific">Rhinolophus macrotis</name>
    <name type="common">Big-eared horseshoe bat</name>
    <dbReference type="NCBI Taxonomy" id="196889"/>
</organismHost>
<comment type="function">
    <text evidence="1 2">Component of the viral envelope that plays a central role in virus morphogenesis and assembly via its interactions with other viral proteins.</text>
</comment>
<comment type="subunit">
    <text evidence="1 2">Homomultimer. Interacts with envelope E protein in the budding compartment of the host cell, which is located between endoplasmic reticulum and the Golgi complex. Forms a complex with HE and S proteins. Interacts with nucleocapsid N protein. This interaction probably participates in RNA packaging into the virus.</text>
</comment>
<comment type="subcellular location">
    <subcellularLocation>
        <location evidence="1">Virion membrane</location>
        <topology evidence="1">Multi-pass membrane protein</topology>
    </subcellularLocation>
    <subcellularLocation>
        <location evidence="1">Host Golgi apparatus membrane</location>
        <topology evidence="1">Multi-pass membrane protein</topology>
    </subcellularLocation>
    <text evidence="1">Largely embedded in the lipid bilayer.</text>
</comment>
<comment type="miscellaneous">
    <text>Bat coronavirus 279/2005 is highly similar to SARS-CoV (SARS-like).</text>
</comment>
<comment type="similarity">
    <text evidence="1">Belongs to the betacoronaviruses M protein family.</text>
</comment>
<reference key="1">
    <citation type="journal article" date="2006" name="J. Virol.">
        <title>Prevalence and genetic diversity of coronaviruses in bats from China.</title>
        <authorList>
            <person name="Tang X.C."/>
            <person name="Zhang J.X."/>
            <person name="Zhang S.Y."/>
            <person name="Wang P."/>
            <person name="Fan X.H."/>
            <person name="Li L.F."/>
            <person name="Li G."/>
            <person name="Dong B.Q."/>
            <person name="Liu W."/>
            <person name="Cheung C.L."/>
            <person name="Xu K.M."/>
            <person name="Song W.J."/>
            <person name="Vijaykrishna D."/>
            <person name="Poon L.L.M."/>
            <person name="Peiris J.S.M."/>
            <person name="Smith G.J."/>
            <person name="Chen H."/>
            <person name="Guan Y."/>
        </authorList>
    </citation>
    <scope>NUCLEOTIDE SEQUENCE [GENOMIC RNA]</scope>
</reference>
<protein>
    <recommendedName>
        <fullName evidence="1">Membrane protein</fullName>
        <shortName evidence="1">M protein</shortName>
    </recommendedName>
    <alternativeName>
        <fullName evidence="1">E1 glycoprotein</fullName>
    </alternativeName>
    <alternativeName>
        <fullName evidence="1">Matrix glycoprotein</fullName>
    </alternativeName>
    <alternativeName>
        <fullName evidence="1">Membrane glycoprotein</fullName>
    </alternativeName>
</protein>
<dbReference type="EMBL" id="DQ648857">
    <property type="protein sequence ID" value="ABG47072.1"/>
    <property type="molecule type" value="Genomic_RNA"/>
</dbReference>
<dbReference type="SMR" id="Q0Q472"/>
<dbReference type="Proteomes" id="UP000006573">
    <property type="component" value="Genome"/>
</dbReference>
<dbReference type="GO" id="GO:0044178">
    <property type="term" value="C:host cell Golgi membrane"/>
    <property type="evidence" value="ECO:0007669"/>
    <property type="project" value="UniProtKB-SubCell"/>
</dbReference>
<dbReference type="GO" id="GO:0016020">
    <property type="term" value="C:membrane"/>
    <property type="evidence" value="ECO:0007669"/>
    <property type="project" value="UniProtKB-UniRule"/>
</dbReference>
<dbReference type="GO" id="GO:0019031">
    <property type="term" value="C:viral envelope"/>
    <property type="evidence" value="ECO:0007669"/>
    <property type="project" value="UniProtKB-UniRule"/>
</dbReference>
<dbReference type="GO" id="GO:0055036">
    <property type="term" value="C:virion membrane"/>
    <property type="evidence" value="ECO:0007669"/>
    <property type="project" value="UniProtKB-SubCell"/>
</dbReference>
<dbReference type="GO" id="GO:0039660">
    <property type="term" value="F:structural constituent of virion"/>
    <property type="evidence" value="ECO:0007669"/>
    <property type="project" value="UniProtKB-UniRule"/>
</dbReference>
<dbReference type="CDD" id="cd21569">
    <property type="entry name" value="SARS-like-CoV_M"/>
    <property type="match status" value="1"/>
</dbReference>
<dbReference type="HAMAP" id="MF_04202">
    <property type="entry name" value="BETA_CORONA_M"/>
    <property type="match status" value="1"/>
</dbReference>
<dbReference type="InterPro" id="IPR002574">
    <property type="entry name" value="M_CoV"/>
</dbReference>
<dbReference type="InterPro" id="IPR044361">
    <property type="entry name" value="M_SARS-like-CoV"/>
</dbReference>
<dbReference type="Pfam" id="PF01635">
    <property type="entry name" value="CoV_M"/>
    <property type="match status" value="1"/>
</dbReference>
<dbReference type="PROSITE" id="PS51927">
    <property type="entry name" value="COV_M"/>
    <property type="match status" value="1"/>
</dbReference>
<keyword id="KW-0325">Glycoprotein</keyword>
<keyword id="KW-1040">Host Golgi apparatus</keyword>
<keyword id="KW-1043">Host membrane</keyword>
<keyword id="KW-0945">Host-virus interaction</keyword>
<keyword id="KW-0472">Membrane</keyword>
<keyword id="KW-0812">Transmembrane</keyword>
<keyword id="KW-1133">Transmembrane helix</keyword>
<keyword id="KW-0261">Viral envelope protein</keyword>
<keyword id="KW-0899">Viral immunoevasion</keyword>
<keyword id="KW-0468">Viral matrix protein</keyword>
<keyword id="KW-0946">Virion</keyword>
<feature type="chain" id="PRO_0000289934" description="Membrane protein">
    <location>
        <begin position="1"/>
        <end position="221"/>
    </location>
</feature>
<feature type="topological domain" description="Virion surface" evidence="1">
    <location>
        <begin position="1"/>
        <end position="18"/>
    </location>
</feature>
<feature type="transmembrane region" description="Helical" evidence="1">
    <location>
        <begin position="19"/>
        <end position="39"/>
    </location>
</feature>
<feature type="topological domain" description="Intravirion" evidence="1">
    <location>
        <begin position="40"/>
        <end position="49"/>
    </location>
</feature>
<feature type="transmembrane region" description="Helical" evidence="1">
    <location>
        <begin position="50"/>
        <end position="70"/>
    </location>
</feature>
<feature type="topological domain" description="Virion surface" evidence="1">
    <location>
        <begin position="71"/>
        <end position="78"/>
    </location>
</feature>
<feature type="transmembrane region" description="Helical" evidence="1">
    <location>
        <begin position="79"/>
        <end position="99"/>
    </location>
</feature>
<feature type="topological domain" description="Intravirion" evidence="1">
    <location>
        <begin position="100"/>
        <end position="221"/>
    </location>
</feature>
<accession>Q0Q472</accession>
<organism>
    <name type="scientific">Bat coronavirus 279/2005</name>
    <name type="common">BtCoV</name>
    <name type="synonym">BtCoV/279/2005</name>
    <dbReference type="NCBI Taxonomy" id="389167"/>
    <lineage>
        <taxon>Viruses</taxon>
        <taxon>Riboviria</taxon>
        <taxon>Orthornavirae</taxon>
        <taxon>Pisuviricota</taxon>
        <taxon>Pisoniviricetes</taxon>
        <taxon>Nidovirales</taxon>
        <taxon>Cornidovirineae</taxon>
        <taxon>Coronaviridae</taxon>
        <taxon>Orthocoronavirinae</taxon>
        <taxon>Betacoronavirus</taxon>
        <taxon>Sarbecovirus</taxon>
        <taxon>Severe acute respiratory syndrome coronavirus</taxon>
    </lineage>
</organism>
<gene>
    <name evidence="1" type="primary">M</name>
    <name type="ORF">5</name>
</gene>
<name>VME1_BC279</name>
<evidence type="ECO:0000255" key="1">
    <source>
        <dbReference type="HAMAP-Rule" id="MF_04202"/>
    </source>
</evidence>
<evidence type="ECO:0000255" key="2">
    <source>
        <dbReference type="PROSITE-ProRule" id="PRU01275"/>
    </source>
</evidence>
<proteinExistence type="inferred from homology"/>